<sequence>MTHDVLLAGAGLANGLIALALRAARPDLRVLLLDHAAGPSDGHTWSCHDPDLSPDWLARLKPLRRANWPDQEVRFPRHARRLATGYGSLDGAALADAVVRSGAEIRWDSDIALLDAQGATLSCGTRIEAGAVLDGRGAQPSRHLTVGFQKFVGVEIETDRPHGVPRPMIMDATVTQQDGYRFIYLLPFSPTRILIEDTRYSDGGDLDDDALAAASHDYARQQGWTGAEVRRERGILPIALAHDAAGFWADHAAGPVPVGLRAGFFHPVTGYSLPYAAQVADVVAGLSGPPGTDALRGAIRDYAIDRARRDRFLRLLNRMLFRGCAPDRRYTLLQRFYRMPHGLIERFYAGRLSVADQLRIVTGKPPIPLGTAIRCLPERPLLKENA</sequence>
<proteinExistence type="evidence at protein level"/>
<comment type="function">
    <text evidence="4">Catalyzes the double cyclization reaction which converts lycopene to beta-carotene.</text>
</comment>
<comment type="catalytic activity">
    <reaction evidence="4">
        <text>a carotenoid psi-end group = a carotenoid beta-end derivative</text>
        <dbReference type="Rhea" id="RHEA:55620"/>
        <dbReference type="ChEBI" id="CHEBI:139114"/>
        <dbReference type="ChEBI" id="CHEBI:139120"/>
        <dbReference type="EC" id="5.5.1.19"/>
    </reaction>
    <physiologicalReaction direction="left-to-right" evidence="4">
        <dbReference type="Rhea" id="RHEA:55621"/>
    </physiologicalReaction>
</comment>
<comment type="catalytic activity">
    <reaction evidence="1">
        <text>all-trans-lycopene = gamma-carotene</text>
        <dbReference type="Rhea" id="RHEA:32219"/>
        <dbReference type="ChEBI" id="CHEBI:15948"/>
        <dbReference type="ChEBI" id="CHEBI:27740"/>
        <dbReference type="EC" id="5.5.1.19"/>
    </reaction>
    <physiologicalReaction direction="left-to-right" evidence="1">
        <dbReference type="Rhea" id="RHEA:32220"/>
    </physiologicalReaction>
</comment>
<comment type="catalytic activity">
    <reaction evidence="1">
        <text>gamma-carotene = all-trans-beta-carotene</text>
        <dbReference type="Rhea" id="RHEA:32239"/>
        <dbReference type="ChEBI" id="CHEBI:17579"/>
        <dbReference type="ChEBI" id="CHEBI:27740"/>
        <dbReference type="EC" id="5.5.1.19"/>
    </reaction>
    <physiologicalReaction direction="left-to-right" evidence="1">
        <dbReference type="Rhea" id="RHEA:32240"/>
    </physiologicalReaction>
</comment>
<comment type="cofactor">
    <cofactor evidence="1">
        <name>FAD</name>
        <dbReference type="ChEBI" id="CHEBI:57692"/>
    </cofactor>
</comment>
<comment type="pathway">
    <text evidence="4">Carotenoid biosynthesis; astaxanthin biosynthesis.</text>
</comment>
<comment type="similarity">
    <text evidence="3">Belongs to the lycopene cyclase family.</text>
</comment>
<organism>
    <name type="scientific">Paracoccus sp. (strain N81106 / MBIC 01143)</name>
    <name type="common">Agrobacterium aurantiacum</name>
    <dbReference type="NCBI Taxonomy" id="81397"/>
    <lineage>
        <taxon>Bacteria</taxon>
        <taxon>Pseudomonadati</taxon>
        <taxon>Pseudomonadota</taxon>
        <taxon>Alphaproteobacteria</taxon>
        <taxon>Rhodobacterales</taxon>
        <taxon>Paracoccaceae</taxon>
        <taxon>Paracoccus</taxon>
    </lineage>
</organism>
<evidence type="ECO:0000250" key="1">
    <source>
        <dbReference type="UniProtKB" id="P21687"/>
    </source>
</evidence>
<evidence type="ECO:0000303" key="2">
    <source>
    </source>
</evidence>
<evidence type="ECO:0000305" key="3"/>
<evidence type="ECO:0000305" key="4">
    <source>
    </source>
</evidence>
<name>CRTY_PARSN</name>
<accession>P54974</accession>
<accession>Q33DT8</accession>
<feature type="chain" id="PRO_0000079373" description="Lycopene beta-cyclase">
    <location>
        <begin position="1"/>
        <end position="386"/>
    </location>
</feature>
<feature type="binding site" evidence="3">
    <location>
        <begin position="4"/>
        <end position="34"/>
    </location>
    <ligand>
        <name>NAD(+)</name>
        <dbReference type="ChEBI" id="CHEBI:57540"/>
    </ligand>
</feature>
<reference key="1">
    <citation type="journal article" date="1995" name="J. Bacteriol.">
        <title>Structure and functional analysis of a marine bacterial carotenoid biosynthesis gene cluster and astaxanthin biosynthetic pathway proposed at the gene level.</title>
        <authorList>
            <person name="Misawa N."/>
            <person name="Satomi Y."/>
            <person name="Kondo K."/>
            <person name="Yokoyama A."/>
            <person name="Kajiwara S."/>
            <person name="Saito T."/>
            <person name="Ohtani T."/>
            <person name="Miki W."/>
        </authorList>
    </citation>
    <scope>NUCLEOTIDE SEQUENCE [GENOMIC DNA]</scope>
    <scope>FUNCTION</scope>
    <scope>CATALYTIC ACTIVITY</scope>
    <scope>PATHWAY</scope>
</reference>
<reference key="2">
    <citation type="submission" date="2005-03" db="EMBL/GenBank/DDBJ databases">
        <title>Structure of the complete carotenoid biosynthesis gene cluster of Paracoccus sp. strain N81106.</title>
        <authorList>
            <person name="Maruyama T."/>
            <person name="Inomata Y."/>
            <person name="Haga M."/>
            <person name="Ide T."/>
            <person name="Misawa N."/>
        </authorList>
    </citation>
    <scope>NUCLEOTIDE SEQUENCE [GENOMIC DNA]</scope>
</reference>
<dbReference type="EC" id="5.5.1.19" evidence="4"/>
<dbReference type="EMBL" id="D58420">
    <property type="protein sequence ID" value="BAA09593.1"/>
    <property type="molecule type" value="Genomic_DNA"/>
</dbReference>
<dbReference type="EMBL" id="AB206672">
    <property type="protein sequence ID" value="BAE47467.1"/>
    <property type="molecule type" value="Genomic_DNA"/>
</dbReference>
<dbReference type="UniPathway" id="UPA00387"/>
<dbReference type="GO" id="GO:0045436">
    <property type="term" value="F:lycopene beta cyclase activity"/>
    <property type="evidence" value="ECO:0007669"/>
    <property type="project" value="InterPro"/>
</dbReference>
<dbReference type="GO" id="GO:0016705">
    <property type="term" value="F:oxidoreductase activity, acting on paired donors, with incorporation or reduction of molecular oxygen"/>
    <property type="evidence" value="ECO:0007669"/>
    <property type="project" value="InterPro"/>
</dbReference>
<dbReference type="GO" id="GO:0016117">
    <property type="term" value="P:carotenoid biosynthetic process"/>
    <property type="evidence" value="ECO:0007669"/>
    <property type="project" value="UniProtKB-KW"/>
</dbReference>
<dbReference type="InterPro" id="IPR008461">
    <property type="entry name" value="CrtY"/>
</dbReference>
<dbReference type="InterPro" id="IPR036188">
    <property type="entry name" value="FAD/NAD-bd_sf"/>
</dbReference>
<dbReference type="InterPro" id="IPR010108">
    <property type="entry name" value="Lycopene_cyclase_b/e"/>
</dbReference>
<dbReference type="NCBIfam" id="TIGR01790">
    <property type="entry name" value="carotene-cycl"/>
    <property type="match status" value="1"/>
</dbReference>
<dbReference type="NCBIfam" id="TIGR01789">
    <property type="entry name" value="lycopene_cycl"/>
    <property type="match status" value="1"/>
</dbReference>
<dbReference type="Pfam" id="PF05834">
    <property type="entry name" value="Lycopene_cycl"/>
    <property type="match status" value="1"/>
</dbReference>
<dbReference type="SUPFAM" id="SSF51905">
    <property type="entry name" value="FAD/NAD(P)-binding domain"/>
    <property type="match status" value="1"/>
</dbReference>
<keyword id="KW-0125">Carotenoid biosynthesis</keyword>
<keyword id="KW-0274">FAD</keyword>
<keyword id="KW-0285">Flavoprotein</keyword>
<keyword id="KW-0413">Isomerase</keyword>
<keyword id="KW-0520">NAD</keyword>
<keyword id="KW-0521">NADP</keyword>
<protein>
    <recommendedName>
        <fullName evidence="3">Lycopene beta-cyclase</fullName>
        <ecNumber evidence="4">5.5.1.19</ecNumber>
    </recommendedName>
    <alternativeName>
        <fullName evidence="2">Lycopene cyclase</fullName>
    </alternativeName>
</protein>
<gene>
    <name evidence="2" type="primary">crtY</name>
</gene>